<gene>
    <name evidence="1" type="primary">cysS</name>
    <name type="ordered locus">RHOS4_13090</name>
    <name type="ORF">RSP_2722</name>
</gene>
<keyword id="KW-0030">Aminoacyl-tRNA synthetase</keyword>
<keyword id="KW-0067">ATP-binding</keyword>
<keyword id="KW-0963">Cytoplasm</keyword>
<keyword id="KW-0436">Ligase</keyword>
<keyword id="KW-0479">Metal-binding</keyword>
<keyword id="KW-0547">Nucleotide-binding</keyword>
<keyword id="KW-0648">Protein biosynthesis</keyword>
<keyword id="KW-1185">Reference proteome</keyword>
<keyword id="KW-0862">Zinc</keyword>
<name>SYC_CERS4</name>
<proteinExistence type="inferred from homology"/>
<feature type="chain" id="PRO_0000240944" description="Cysteine--tRNA ligase">
    <location>
        <begin position="1"/>
        <end position="499"/>
    </location>
</feature>
<feature type="short sequence motif" description="'HIGH' region">
    <location>
        <begin position="32"/>
        <end position="42"/>
    </location>
</feature>
<feature type="short sequence motif" description="'KMSKS' region">
    <location>
        <begin position="279"/>
        <end position="283"/>
    </location>
</feature>
<feature type="binding site" evidence="1">
    <location>
        <position position="30"/>
    </location>
    <ligand>
        <name>Zn(2+)</name>
        <dbReference type="ChEBI" id="CHEBI:29105"/>
    </ligand>
</feature>
<feature type="binding site" evidence="1">
    <location>
        <position position="221"/>
    </location>
    <ligand>
        <name>Zn(2+)</name>
        <dbReference type="ChEBI" id="CHEBI:29105"/>
    </ligand>
</feature>
<feature type="binding site" evidence="1">
    <location>
        <position position="246"/>
    </location>
    <ligand>
        <name>Zn(2+)</name>
        <dbReference type="ChEBI" id="CHEBI:29105"/>
    </ligand>
</feature>
<feature type="binding site" evidence="1">
    <location>
        <position position="250"/>
    </location>
    <ligand>
        <name>Zn(2+)</name>
        <dbReference type="ChEBI" id="CHEBI:29105"/>
    </ligand>
</feature>
<feature type="binding site" evidence="1">
    <location>
        <position position="282"/>
    </location>
    <ligand>
        <name>ATP</name>
        <dbReference type="ChEBI" id="CHEBI:30616"/>
    </ligand>
</feature>
<sequence length="499" mass="55979">MTEIRLTNTKSRRKEAFEPIDRKNVRLYVCGPTVYDRAHLGNGRPVVVFDVLFRLLRHVYGEGHVTYVRNFTDVDDKINAAALARKDAGDPRSLEALIRERTDETIRWYHEDMDALGALRPTHEPRATEWIGAMIAMIEDLIAKGHAYEREGHVLFRVRSYRDYGALSGRSVDDMIAGARVEVAPFKEDPMDFVLWKPSDDELPGWDSPWGRGRPGWHIECSAMSYELLGATFDIHAGGIDLQFPHHENEIAQSCCAHPEGGFARVWMHNEMLLVDGRKMSKSLGNFFTVRDLLDQGWPGEVIRMVYLGTHYGRPMDWTAEKAEQAKTTLRNWAEMVEGAAPGEVRAEVVDPLSDDLNTAGALAALSDLYKRKDAAGLLGSAHLLGVDLQAIRHQPWARPYAFEELDGRFLREGIDYQPTVGVIGWGEITDQARETSIGLLHRWLALRRAGDFETADRLKTDAMRLGVELRAQKSPNGVTGGLAKLADRVDVSALEGLL</sequence>
<accession>Q3J2V7</accession>
<protein>
    <recommendedName>
        <fullName evidence="1">Cysteine--tRNA ligase</fullName>
        <ecNumber evidence="1">6.1.1.16</ecNumber>
    </recommendedName>
    <alternativeName>
        <fullName evidence="1">Cysteinyl-tRNA synthetase</fullName>
        <shortName evidence="1">CysRS</shortName>
    </alternativeName>
</protein>
<dbReference type="EC" id="6.1.1.16" evidence="1"/>
<dbReference type="EMBL" id="CP000143">
    <property type="protein sequence ID" value="ABA78877.1"/>
    <property type="molecule type" value="Genomic_DNA"/>
</dbReference>
<dbReference type="RefSeq" id="WP_011337688.1">
    <property type="nucleotide sequence ID" value="NC_007493.2"/>
</dbReference>
<dbReference type="RefSeq" id="YP_352778.1">
    <property type="nucleotide sequence ID" value="NC_007493.2"/>
</dbReference>
<dbReference type="SMR" id="Q3J2V7"/>
<dbReference type="STRING" id="272943.RSP_2722"/>
<dbReference type="EnsemblBacteria" id="ABA78877">
    <property type="protein sequence ID" value="ABA78877"/>
    <property type="gene ID" value="RSP_2722"/>
</dbReference>
<dbReference type="GeneID" id="3720452"/>
<dbReference type="KEGG" id="rsp:RSP_2722"/>
<dbReference type="PATRIC" id="fig|272943.9.peg.1649"/>
<dbReference type="eggNOG" id="COG0215">
    <property type="taxonomic scope" value="Bacteria"/>
</dbReference>
<dbReference type="OrthoDB" id="9815130at2"/>
<dbReference type="PhylomeDB" id="Q3J2V7"/>
<dbReference type="Proteomes" id="UP000002703">
    <property type="component" value="Chromosome 1"/>
</dbReference>
<dbReference type="GO" id="GO:0005829">
    <property type="term" value="C:cytosol"/>
    <property type="evidence" value="ECO:0007669"/>
    <property type="project" value="TreeGrafter"/>
</dbReference>
<dbReference type="GO" id="GO:0005524">
    <property type="term" value="F:ATP binding"/>
    <property type="evidence" value="ECO:0007669"/>
    <property type="project" value="UniProtKB-UniRule"/>
</dbReference>
<dbReference type="GO" id="GO:0004817">
    <property type="term" value="F:cysteine-tRNA ligase activity"/>
    <property type="evidence" value="ECO:0007669"/>
    <property type="project" value="UniProtKB-UniRule"/>
</dbReference>
<dbReference type="GO" id="GO:0008270">
    <property type="term" value="F:zinc ion binding"/>
    <property type="evidence" value="ECO:0007669"/>
    <property type="project" value="UniProtKB-UniRule"/>
</dbReference>
<dbReference type="GO" id="GO:0006423">
    <property type="term" value="P:cysteinyl-tRNA aminoacylation"/>
    <property type="evidence" value="ECO:0007669"/>
    <property type="project" value="UniProtKB-UniRule"/>
</dbReference>
<dbReference type="CDD" id="cd00672">
    <property type="entry name" value="CysRS_core"/>
    <property type="match status" value="1"/>
</dbReference>
<dbReference type="Gene3D" id="1.20.120.1910">
    <property type="entry name" value="Cysteine-tRNA ligase, C-terminal anti-codon recognition domain"/>
    <property type="match status" value="1"/>
</dbReference>
<dbReference type="Gene3D" id="3.40.50.620">
    <property type="entry name" value="HUPs"/>
    <property type="match status" value="1"/>
</dbReference>
<dbReference type="HAMAP" id="MF_00041">
    <property type="entry name" value="Cys_tRNA_synth"/>
    <property type="match status" value="1"/>
</dbReference>
<dbReference type="InterPro" id="IPR015803">
    <property type="entry name" value="Cys-tRNA-ligase"/>
</dbReference>
<dbReference type="InterPro" id="IPR024909">
    <property type="entry name" value="Cys-tRNA/MSH_ligase"/>
</dbReference>
<dbReference type="InterPro" id="IPR014729">
    <property type="entry name" value="Rossmann-like_a/b/a_fold"/>
</dbReference>
<dbReference type="InterPro" id="IPR032678">
    <property type="entry name" value="tRNA-synt_1_cat_dom"/>
</dbReference>
<dbReference type="InterPro" id="IPR009080">
    <property type="entry name" value="tRNAsynth_Ia_anticodon-bd"/>
</dbReference>
<dbReference type="NCBIfam" id="TIGR00435">
    <property type="entry name" value="cysS"/>
    <property type="match status" value="1"/>
</dbReference>
<dbReference type="PANTHER" id="PTHR10890:SF3">
    <property type="entry name" value="CYSTEINE--TRNA LIGASE, CYTOPLASMIC"/>
    <property type="match status" value="1"/>
</dbReference>
<dbReference type="PANTHER" id="PTHR10890">
    <property type="entry name" value="CYSTEINYL-TRNA SYNTHETASE"/>
    <property type="match status" value="1"/>
</dbReference>
<dbReference type="Pfam" id="PF01406">
    <property type="entry name" value="tRNA-synt_1e"/>
    <property type="match status" value="1"/>
</dbReference>
<dbReference type="PRINTS" id="PR00983">
    <property type="entry name" value="TRNASYNTHCYS"/>
</dbReference>
<dbReference type="SUPFAM" id="SSF47323">
    <property type="entry name" value="Anticodon-binding domain of a subclass of class I aminoacyl-tRNA synthetases"/>
    <property type="match status" value="1"/>
</dbReference>
<dbReference type="SUPFAM" id="SSF52374">
    <property type="entry name" value="Nucleotidylyl transferase"/>
    <property type="match status" value="1"/>
</dbReference>
<comment type="catalytic activity">
    <reaction evidence="1">
        <text>tRNA(Cys) + L-cysteine + ATP = L-cysteinyl-tRNA(Cys) + AMP + diphosphate</text>
        <dbReference type="Rhea" id="RHEA:17773"/>
        <dbReference type="Rhea" id="RHEA-COMP:9661"/>
        <dbReference type="Rhea" id="RHEA-COMP:9679"/>
        <dbReference type="ChEBI" id="CHEBI:30616"/>
        <dbReference type="ChEBI" id="CHEBI:33019"/>
        <dbReference type="ChEBI" id="CHEBI:35235"/>
        <dbReference type="ChEBI" id="CHEBI:78442"/>
        <dbReference type="ChEBI" id="CHEBI:78517"/>
        <dbReference type="ChEBI" id="CHEBI:456215"/>
        <dbReference type="EC" id="6.1.1.16"/>
    </reaction>
</comment>
<comment type="cofactor">
    <cofactor evidence="1">
        <name>Zn(2+)</name>
        <dbReference type="ChEBI" id="CHEBI:29105"/>
    </cofactor>
    <text evidence="1">Binds 1 zinc ion per subunit.</text>
</comment>
<comment type="subunit">
    <text evidence="1">Monomer.</text>
</comment>
<comment type="subcellular location">
    <subcellularLocation>
        <location evidence="1">Cytoplasm</location>
    </subcellularLocation>
</comment>
<comment type="similarity">
    <text evidence="1">Belongs to the class-I aminoacyl-tRNA synthetase family.</text>
</comment>
<evidence type="ECO:0000255" key="1">
    <source>
        <dbReference type="HAMAP-Rule" id="MF_00041"/>
    </source>
</evidence>
<reference key="1">
    <citation type="submission" date="2005-09" db="EMBL/GenBank/DDBJ databases">
        <title>Complete sequence of chromosome 1 of Rhodobacter sphaeroides 2.4.1.</title>
        <authorList>
            <person name="Copeland A."/>
            <person name="Lucas S."/>
            <person name="Lapidus A."/>
            <person name="Barry K."/>
            <person name="Detter J.C."/>
            <person name="Glavina T."/>
            <person name="Hammon N."/>
            <person name="Israni S."/>
            <person name="Pitluck S."/>
            <person name="Richardson P."/>
            <person name="Mackenzie C."/>
            <person name="Choudhary M."/>
            <person name="Larimer F."/>
            <person name="Hauser L.J."/>
            <person name="Land M."/>
            <person name="Donohue T.J."/>
            <person name="Kaplan S."/>
        </authorList>
    </citation>
    <scope>NUCLEOTIDE SEQUENCE [LARGE SCALE GENOMIC DNA]</scope>
    <source>
        <strain>ATCC 17023 / DSM 158 / JCM 6121 / CCUG 31486 / LMG 2827 / NBRC 12203 / NCIMB 8253 / ATH 2.4.1.</strain>
    </source>
</reference>
<organism>
    <name type="scientific">Cereibacter sphaeroides (strain ATCC 17023 / DSM 158 / JCM 6121 / CCUG 31486 / LMG 2827 / NBRC 12203 / NCIMB 8253 / ATH 2.4.1.)</name>
    <name type="common">Rhodobacter sphaeroides</name>
    <dbReference type="NCBI Taxonomy" id="272943"/>
    <lineage>
        <taxon>Bacteria</taxon>
        <taxon>Pseudomonadati</taxon>
        <taxon>Pseudomonadota</taxon>
        <taxon>Alphaproteobacteria</taxon>
        <taxon>Rhodobacterales</taxon>
        <taxon>Paracoccaceae</taxon>
        <taxon>Cereibacter</taxon>
    </lineage>
</organism>